<keyword id="KW-0479">Metal-binding</keyword>
<keyword id="KW-0489">Methyltransferase</keyword>
<keyword id="KW-1185">Reference proteome</keyword>
<keyword id="KW-0694">RNA-binding</keyword>
<keyword id="KW-0949">S-adenosyl-L-methionine</keyword>
<keyword id="KW-0808">Transferase</keyword>
<keyword id="KW-0819">tRNA processing</keyword>
<keyword id="KW-0820">tRNA-binding</keyword>
<keyword id="KW-0862">Zinc</keyword>
<sequence>MRVSEGRVTVTVPEQPEAGKGADVFFNPVQELNRDITVAALRAYRERTPRVSTYLDATAASGIRGVRAAANDWETTLCDIDDDATALCEQNLERNDLAASVRRSDANVLMHSEAFDVVDVDPFGTPIPFADAAVQGTKHLLCVTATDTAPLCGAHFESGVRSYGAVPRNTEFHAEMGMRVLLSAMVRTAARYDIAARPILSHATKHYARTYLEFDHGAKVANDCIDELGYVHHCQHCLWRDHDYGLIADPPEDCPVCEKHLQTAGPIWLGRTCDPEFVSAVSEQVSEEMGTADEAKELLATLGAEIDTPTHYDQHRLCKRWGRGAEAMDEFIEKLRDAGYAASRTHYGGTTFKTDADVVEIREATAD</sequence>
<name>TRM1_HALMA</name>
<reference key="1">
    <citation type="journal article" date="2004" name="Genome Res.">
        <title>Genome sequence of Haloarcula marismortui: a halophilic archaeon from the Dead Sea.</title>
        <authorList>
            <person name="Baliga N.S."/>
            <person name="Bonneau R."/>
            <person name="Facciotti M.T."/>
            <person name="Pan M."/>
            <person name="Glusman G."/>
            <person name="Deutsch E.W."/>
            <person name="Shannon P."/>
            <person name="Chiu Y."/>
            <person name="Weng R.S."/>
            <person name="Gan R.R."/>
            <person name="Hung P."/>
            <person name="Date S.V."/>
            <person name="Marcotte E."/>
            <person name="Hood L."/>
            <person name="Ng W.V."/>
        </authorList>
    </citation>
    <scope>NUCLEOTIDE SEQUENCE [LARGE SCALE GENOMIC DNA]</scope>
    <source>
        <strain>ATCC 43049 / DSM 3752 / JCM 8966 / VKM B-1809</strain>
    </source>
</reference>
<comment type="function">
    <text evidence="1">Dimethylates a single guanine residue at position 26 of a number of tRNAs using S-adenosyl-L-methionine as donor of the methyl groups.</text>
</comment>
<comment type="catalytic activity">
    <reaction evidence="1">
        <text>guanosine(26) in tRNA + 2 S-adenosyl-L-methionine = N(2)-dimethylguanosine(26) in tRNA + 2 S-adenosyl-L-homocysteine + 2 H(+)</text>
        <dbReference type="Rhea" id="RHEA:43140"/>
        <dbReference type="Rhea" id="RHEA-COMP:10359"/>
        <dbReference type="Rhea" id="RHEA-COMP:10360"/>
        <dbReference type="ChEBI" id="CHEBI:15378"/>
        <dbReference type="ChEBI" id="CHEBI:57856"/>
        <dbReference type="ChEBI" id="CHEBI:59789"/>
        <dbReference type="ChEBI" id="CHEBI:74269"/>
        <dbReference type="ChEBI" id="CHEBI:74513"/>
        <dbReference type="EC" id="2.1.1.216"/>
    </reaction>
</comment>
<comment type="similarity">
    <text evidence="1">Belongs to the class I-like SAM-binding methyltransferase superfamily. Trm1 family.</text>
</comment>
<gene>
    <name evidence="1" type="primary">trm1</name>
    <name type="ordered locus">rrnAC2788</name>
</gene>
<feature type="chain" id="PRO_0000259372" description="tRNA (guanine(26)-N(2))-dimethyltransferase">
    <location>
        <begin position="1"/>
        <end position="367"/>
    </location>
</feature>
<feature type="domain" description="Trm1 methyltransferase" evidence="1">
    <location>
        <begin position="1"/>
        <end position="365"/>
    </location>
</feature>
<feature type="binding site" evidence="1">
    <location>
        <position position="34"/>
    </location>
    <ligand>
        <name>S-adenosyl-L-methionine</name>
        <dbReference type="ChEBI" id="CHEBI:59789"/>
    </ligand>
</feature>
<feature type="binding site" evidence="1">
    <location>
        <position position="64"/>
    </location>
    <ligand>
        <name>S-adenosyl-L-methionine</name>
        <dbReference type="ChEBI" id="CHEBI:59789"/>
    </ligand>
</feature>
<feature type="binding site" evidence="1">
    <location>
        <position position="79"/>
    </location>
    <ligand>
        <name>S-adenosyl-L-methionine</name>
        <dbReference type="ChEBI" id="CHEBI:59789"/>
    </ligand>
</feature>
<feature type="binding site" evidence="1">
    <location>
        <position position="105"/>
    </location>
    <ligand>
        <name>S-adenosyl-L-methionine</name>
        <dbReference type="ChEBI" id="CHEBI:59789"/>
    </ligand>
</feature>
<feature type="binding site" evidence="1">
    <location>
        <position position="106"/>
    </location>
    <ligand>
        <name>S-adenosyl-L-methionine</name>
        <dbReference type="ChEBI" id="CHEBI:59789"/>
    </ligand>
</feature>
<feature type="binding site" evidence="1">
    <location>
        <position position="234"/>
    </location>
    <ligand>
        <name>Zn(2+)</name>
        <dbReference type="ChEBI" id="CHEBI:29105"/>
    </ligand>
</feature>
<feature type="binding site" evidence="1">
    <location>
        <position position="237"/>
    </location>
    <ligand>
        <name>Zn(2+)</name>
        <dbReference type="ChEBI" id="CHEBI:29105"/>
    </ligand>
</feature>
<feature type="binding site" evidence="1">
    <location>
        <position position="254"/>
    </location>
    <ligand>
        <name>Zn(2+)</name>
        <dbReference type="ChEBI" id="CHEBI:29105"/>
    </ligand>
</feature>
<feature type="binding site" evidence="1">
    <location>
        <position position="257"/>
    </location>
    <ligand>
        <name>Zn(2+)</name>
        <dbReference type="ChEBI" id="CHEBI:29105"/>
    </ligand>
</feature>
<accession>Q5UYV8</accession>
<evidence type="ECO:0000255" key="1">
    <source>
        <dbReference type="HAMAP-Rule" id="MF_00290"/>
    </source>
</evidence>
<proteinExistence type="inferred from homology"/>
<dbReference type="EC" id="2.1.1.216" evidence="1"/>
<dbReference type="EMBL" id="AY596297">
    <property type="protein sequence ID" value="AAV47545.1"/>
    <property type="molecule type" value="Genomic_DNA"/>
</dbReference>
<dbReference type="RefSeq" id="WP_011224430.1">
    <property type="nucleotide sequence ID" value="NC_006396.1"/>
</dbReference>
<dbReference type="SMR" id="Q5UYV8"/>
<dbReference type="STRING" id="272569.rrnAC2788"/>
<dbReference type="PaxDb" id="272569-rrnAC2788"/>
<dbReference type="EnsemblBacteria" id="AAV47545">
    <property type="protein sequence ID" value="AAV47545"/>
    <property type="gene ID" value="rrnAC2788"/>
</dbReference>
<dbReference type="GeneID" id="40153642"/>
<dbReference type="KEGG" id="hma:rrnAC2788"/>
<dbReference type="PATRIC" id="fig|272569.17.peg.3362"/>
<dbReference type="eggNOG" id="arCOG01219">
    <property type="taxonomic scope" value="Archaea"/>
</dbReference>
<dbReference type="HOGENOM" id="CLU_010862_5_1_2"/>
<dbReference type="Proteomes" id="UP000001169">
    <property type="component" value="Chromosome I"/>
</dbReference>
<dbReference type="GO" id="GO:0160104">
    <property type="term" value="F:tRNA (guanine(26)-N2)-dimethyltransferase activity"/>
    <property type="evidence" value="ECO:0007669"/>
    <property type="project" value="UniProtKB-UniRule"/>
</dbReference>
<dbReference type="GO" id="GO:0000049">
    <property type="term" value="F:tRNA binding"/>
    <property type="evidence" value="ECO:0007669"/>
    <property type="project" value="UniProtKB-KW"/>
</dbReference>
<dbReference type="GO" id="GO:0002940">
    <property type="term" value="P:tRNA N2-guanine methylation"/>
    <property type="evidence" value="ECO:0007669"/>
    <property type="project" value="TreeGrafter"/>
</dbReference>
<dbReference type="Gene3D" id="3.30.56.70">
    <property type="entry name" value="N2,N2-dimethylguanosine tRNA methyltransferase, C-terminal domain"/>
    <property type="match status" value="1"/>
</dbReference>
<dbReference type="Gene3D" id="3.40.50.150">
    <property type="entry name" value="Vaccinia Virus protein VP39"/>
    <property type="match status" value="1"/>
</dbReference>
<dbReference type="HAMAP" id="MF_00290">
    <property type="entry name" value="tRNA_dimethyltr_TRM1"/>
    <property type="match status" value="1"/>
</dbReference>
<dbReference type="InterPro" id="IPR029063">
    <property type="entry name" value="SAM-dependent_MTases_sf"/>
</dbReference>
<dbReference type="InterPro" id="IPR002905">
    <property type="entry name" value="Trm1"/>
</dbReference>
<dbReference type="InterPro" id="IPR022923">
    <property type="entry name" value="TRM1_arc_bac"/>
</dbReference>
<dbReference type="InterPro" id="IPR042296">
    <property type="entry name" value="tRNA_met_Trm1_C"/>
</dbReference>
<dbReference type="NCBIfam" id="NF003327">
    <property type="entry name" value="PRK04338.1-1"/>
    <property type="match status" value="1"/>
</dbReference>
<dbReference type="NCBIfam" id="TIGR00308">
    <property type="entry name" value="TRM1"/>
    <property type="match status" value="1"/>
</dbReference>
<dbReference type="PANTHER" id="PTHR10631">
    <property type="entry name" value="N 2 ,N 2 -DIMETHYLGUANOSINE TRNA METHYLTRANSFERASE"/>
    <property type="match status" value="1"/>
</dbReference>
<dbReference type="PANTHER" id="PTHR10631:SF3">
    <property type="entry name" value="TRNA (GUANINE(26)-N(2))-DIMETHYLTRANSFERASE"/>
    <property type="match status" value="1"/>
</dbReference>
<dbReference type="Pfam" id="PF02005">
    <property type="entry name" value="TRM"/>
    <property type="match status" value="1"/>
</dbReference>
<dbReference type="SUPFAM" id="SSF53335">
    <property type="entry name" value="S-adenosyl-L-methionine-dependent methyltransferases"/>
    <property type="match status" value="1"/>
</dbReference>
<dbReference type="PROSITE" id="PS51626">
    <property type="entry name" value="SAM_MT_TRM1"/>
    <property type="match status" value="1"/>
</dbReference>
<organism>
    <name type="scientific">Haloarcula marismortui (strain ATCC 43049 / DSM 3752 / JCM 8966 / VKM B-1809)</name>
    <name type="common">Halobacterium marismortui</name>
    <dbReference type="NCBI Taxonomy" id="272569"/>
    <lineage>
        <taxon>Archaea</taxon>
        <taxon>Methanobacteriati</taxon>
        <taxon>Methanobacteriota</taxon>
        <taxon>Stenosarchaea group</taxon>
        <taxon>Halobacteria</taxon>
        <taxon>Halobacteriales</taxon>
        <taxon>Haloarculaceae</taxon>
        <taxon>Haloarcula</taxon>
    </lineage>
</organism>
<protein>
    <recommendedName>
        <fullName evidence="1">tRNA (guanine(26)-N(2))-dimethyltransferase</fullName>
        <ecNumber evidence="1">2.1.1.216</ecNumber>
    </recommendedName>
    <alternativeName>
        <fullName evidence="1">tRNA 2,2-dimethylguanosine-26 methyltransferase</fullName>
    </alternativeName>
    <alternativeName>
        <fullName evidence="1">tRNA(guanine-26,N(2)-N(2)) methyltransferase</fullName>
    </alternativeName>
    <alternativeName>
        <fullName evidence="1">tRNA(m(2,2)G26)dimethyltransferase</fullName>
    </alternativeName>
</protein>